<keyword id="KW-0687">Ribonucleoprotein</keyword>
<keyword id="KW-0689">Ribosomal protein</keyword>
<protein>
    <recommendedName>
        <fullName evidence="1">Small ribosomal subunit protein uS2</fullName>
    </recommendedName>
    <alternativeName>
        <fullName>30S ribosomal protein S2</fullName>
    </alternativeName>
</protein>
<feature type="chain" id="PRO_0000134237" description="Small ribosomal subunit protein uS2">
    <location>
        <begin position="1"/>
        <end position="251"/>
    </location>
</feature>
<name>RS2_ARTPT</name>
<reference key="1">
    <citation type="journal article" date="1990" name="FEMS Microbiol. Lett.">
        <title>Organization and nucleotide sequence of the genes for ribosomal protein S2 and elongation factor Ts in Spirulina platensis.</title>
        <authorList>
            <person name="Sanangelantoni A.M."/>
            <person name="Calogero R.C."/>
            <person name="Buttarelli F.R."/>
            <person name="Gualerzi C.O."/>
            <person name="Tiboni O."/>
        </authorList>
    </citation>
    <scope>NUCLEOTIDE SEQUENCE [GENOMIC DNA]</scope>
</reference>
<sequence>MPSVTMRDMLKAGVHFGHQTRFWNPKMKPYIFGARNKIHIVNLEKTLPLFNDALGFVNKLASSNNTILFVGTKRAAQKAVAEEATRCGMPYVDHRWLGGMLTNWKTIRQSIKRFRDLEAQANDGTFDKLTKKEALMRRREMEKLERSIGGIKDMGGLPDALFVIDVDHEDIAVQEARKLGIPVIAVVDTNSNPDGVDYFIPGNDDAIRAIQLYVGAVADAIIEGRQYAATQAPGGDSDGFVEVEEAGEAQA</sequence>
<gene>
    <name type="primary">rpsB</name>
    <name type="synonym">rps2</name>
</gene>
<proteinExistence type="inferred from homology"/>
<accession>P34831</accession>
<organism>
    <name type="scientific">Arthrospira platensis</name>
    <name type="common">Spirulina platensis</name>
    <dbReference type="NCBI Taxonomy" id="118562"/>
    <lineage>
        <taxon>Bacteria</taxon>
        <taxon>Bacillati</taxon>
        <taxon>Cyanobacteriota</taxon>
        <taxon>Cyanophyceae</taxon>
        <taxon>Oscillatoriophycideae</taxon>
        <taxon>Oscillatoriales</taxon>
        <taxon>Microcoleaceae</taxon>
        <taxon>Arthrospira</taxon>
    </lineage>
</organism>
<evidence type="ECO:0000305" key="1"/>
<comment type="similarity">
    <text evidence="1">Belongs to the universal ribosomal protein uS2 family.</text>
</comment>
<dbReference type="EMBL" id="X53651">
    <property type="protein sequence ID" value="CAA37700.1"/>
    <property type="molecule type" value="Genomic_DNA"/>
</dbReference>
<dbReference type="SMR" id="P34831"/>
<dbReference type="GO" id="GO:0022627">
    <property type="term" value="C:cytosolic small ribosomal subunit"/>
    <property type="evidence" value="ECO:0007669"/>
    <property type="project" value="TreeGrafter"/>
</dbReference>
<dbReference type="GO" id="GO:0003735">
    <property type="term" value="F:structural constituent of ribosome"/>
    <property type="evidence" value="ECO:0007669"/>
    <property type="project" value="InterPro"/>
</dbReference>
<dbReference type="GO" id="GO:0006412">
    <property type="term" value="P:translation"/>
    <property type="evidence" value="ECO:0007669"/>
    <property type="project" value="UniProtKB-UniRule"/>
</dbReference>
<dbReference type="CDD" id="cd01425">
    <property type="entry name" value="RPS2"/>
    <property type="match status" value="1"/>
</dbReference>
<dbReference type="FunFam" id="1.10.287.610:FF:000001">
    <property type="entry name" value="30S ribosomal protein S2"/>
    <property type="match status" value="1"/>
</dbReference>
<dbReference type="Gene3D" id="3.40.50.10490">
    <property type="entry name" value="Glucose-6-phosphate isomerase like protein, domain 1"/>
    <property type="match status" value="1"/>
</dbReference>
<dbReference type="Gene3D" id="1.10.287.610">
    <property type="entry name" value="Helix hairpin bin"/>
    <property type="match status" value="1"/>
</dbReference>
<dbReference type="HAMAP" id="MF_00291_B">
    <property type="entry name" value="Ribosomal_uS2_B"/>
    <property type="match status" value="1"/>
</dbReference>
<dbReference type="InterPro" id="IPR001865">
    <property type="entry name" value="Ribosomal_uS2"/>
</dbReference>
<dbReference type="InterPro" id="IPR005706">
    <property type="entry name" value="Ribosomal_uS2_bac/mit/plastid"/>
</dbReference>
<dbReference type="InterPro" id="IPR018130">
    <property type="entry name" value="Ribosomal_uS2_CS"/>
</dbReference>
<dbReference type="InterPro" id="IPR023591">
    <property type="entry name" value="Ribosomal_uS2_flav_dom_sf"/>
</dbReference>
<dbReference type="NCBIfam" id="TIGR01011">
    <property type="entry name" value="rpsB_bact"/>
    <property type="match status" value="1"/>
</dbReference>
<dbReference type="PANTHER" id="PTHR12534">
    <property type="entry name" value="30S RIBOSOMAL PROTEIN S2 PROKARYOTIC AND ORGANELLAR"/>
    <property type="match status" value="1"/>
</dbReference>
<dbReference type="PANTHER" id="PTHR12534:SF0">
    <property type="entry name" value="SMALL RIBOSOMAL SUBUNIT PROTEIN US2M"/>
    <property type="match status" value="1"/>
</dbReference>
<dbReference type="Pfam" id="PF00318">
    <property type="entry name" value="Ribosomal_S2"/>
    <property type="match status" value="1"/>
</dbReference>
<dbReference type="PRINTS" id="PR00395">
    <property type="entry name" value="RIBOSOMALS2"/>
</dbReference>
<dbReference type="SUPFAM" id="SSF52313">
    <property type="entry name" value="Ribosomal protein S2"/>
    <property type="match status" value="1"/>
</dbReference>
<dbReference type="PROSITE" id="PS00962">
    <property type="entry name" value="RIBOSOMAL_S2_1"/>
    <property type="match status" value="1"/>
</dbReference>
<dbReference type="PROSITE" id="PS00963">
    <property type="entry name" value="RIBOSOMAL_S2_2"/>
    <property type="match status" value="1"/>
</dbReference>